<reference key="1">
    <citation type="journal article" date="2010" name="Genome Biol.">
        <title>Structure and dynamics of the pan-genome of Streptococcus pneumoniae and closely related species.</title>
        <authorList>
            <person name="Donati C."/>
            <person name="Hiller N.L."/>
            <person name="Tettelin H."/>
            <person name="Muzzi A."/>
            <person name="Croucher N.J."/>
            <person name="Angiuoli S.V."/>
            <person name="Oggioni M."/>
            <person name="Dunning Hotopp J.C."/>
            <person name="Hu F.Z."/>
            <person name="Riley D.R."/>
            <person name="Covacci A."/>
            <person name="Mitchell T.J."/>
            <person name="Bentley S.D."/>
            <person name="Kilian M."/>
            <person name="Ehrlich G.D."/>
            <person name="Rappuoli R."/>
            <person name="Moxon E.R."/>
            <person name="Masignani V."/>
        </authorList>
    </citation>
    <scope>NUCLEOTIDE SEQUENCE [LARGE SCALE GENOMIC DNA]</scope>
    <source>
        <strain>70585</strain>
    </source>
</reference>
<organism>
    <name type="scientific">Streptococcus pneumoniae (strain 70585)</name>
    <dbReference type="NCBI Taxonomy" id="488221"/>
    <lineage>
        <taxon>Bacteria</taxon>
        <taxon>Bacillati</taxon>
        <taxon>Bacillota</taxon>
        <taxon>Bacilli</taxon>
        <taxon>Lactobacillales</taxon>
        <taxon>Streptococcaceae</taxon>
        <taxon>Streptococcus</taxon>
    </lineage>
</organism>
<proteinExistence type="inferred from homology"/>
<feature type="chain" id="PRO_1000192113" description="UDP-N-acetylmuramate--L-alanine ligase">
    <location>
        <begin position="1"/>
        <end position="444"/>
    </location>
</feature>
<feature type="binding site" evidence="1">
    <location>
        <begin position="110"/>
        <end position="116"/>
    </location>
    <ligand>
        <name>ATP</name>
        <dbReference type="ChEBI" id="CHEBI:30616"/>
    </ligand>
</feature>
<evidence type="ECO:0000255" key="1">
    <source>
        <dbReference type="HAMAP-Rule" id="MF_00046"/>
    </source>
</evidence>
<protein>
    <recommendedName>
        <fullName evidence="1">UDP-N-acetylmuramate--L-alanine ligase</fullName>
        <ecNumber evidence="1">6.3.2.8</ecNumber>
    </recommendedName>
    <alternativeName>
        <fullName evidence="1">UDP-N-acetylmuramoyl-L-alanine synthetase</fullName>
    </alternativeName>
</protein>
<dbReference type="EC" id="6.3.2.8" evidence="1"/>
<dbReference type="EMBL" id="CP000918">
    <property type="protein sequence ID" value="ACO16506.1"/>
    <property type="molecule type" value="Genomic_DNA"/>
</dbReference>
<dbReference type="RefSeq" id="WP_000048088.1">
    <property type="nucleotide sequence ID" value="NC_012468.1"/>
</dbReference>
<dbReference type="SMR" id="C1C8B2"/>
<dbReference type="KEGG" id="snm:SP70585_1560"/>
<dbReference type="HOGENOM" id="CLU_028104_1_0_9"/>
<dbReference type="UniPathway" id="UPA00219"/>
<dbReference type="Proteomes" id="UP000002211">
    <property type="component" value="Chromosome"/>
</dbReference>
<dbReference type="GO" id="GO:0005737">
    <property type="term" value="C:cytoplasm"/>
    <property type="evidence" value="ECO:0007669"/>
    <property type="project" value="UniProtKB-SubCell"/>
</dbReference>
<dbReference type="GO" id="GO:0005524">
    <property type="term" value="F:ATP binding"/>
    <property type="evidence" value="ECO:0007669"/>
    <property type="project" value="UniProtKB-UniRule"/>
</dbReference>
<dbReference type="GO" id="GO:0008763">
    <property type="term" value="F:UDP-N-acetylmuramate-L-alanine ligase activity"/>
    <property type="evidence" value="ECO:0007669"/>
    <property type="project" value="UniProtKB-UniRule"/>
</dbReference>
<dbReference type="GO" id="GO:0051301">
    <property type="term" value="P:cell division"/>
    <property type="evidence" value="ECO:0007669"/>
    <property type="project" value="UniProtKB-KW"/>
</dbReference>
<dbReference type="GO" id="GO:0071555">
    <property type="term" value="P:cell wall organization"/>
    <property type="evidence" value="ECO:0007669"/>
    <property type="project" value="UniProtKB-KW"/>
</dbReference>
<dbReference type="GO" id="GO:0009252">
    <property type="term" value="P:peptidoglycan biosynthetic process"/>
    <property type="evidence" value="ECO:0007669"/>
    <property type="project" value="UniProtKB-UniRule"/>
</dbReference>
<dbReference type="GO" id="GO:0008360">
    <property type="term" value="P:regulation of cell shape"/>
    <property type="evidence" value="ECO:0007669"/>
    <property type="project" value="UniProtKB-KW"/>
</dbReference>
<dbReference type="Gene3D" id="3.90.190.20">
    <property type="entry name" value="Mur ligase, C-terminal domain"/>
    <property type="match status" value="1"/>
</dbReference>
<dbReference type="Gene3D" id="3.40.1190.10">
    <property type="entry name" value="Mur-like, catalytic domain"/>
    <property type="match status" value="1"/>
</dbReference>
<dbReference type="Gene3D" id="3.40.50.720">
    <property type="entry name" value="NAD(P)-binding Rossmann-like Domain"/>
    <property type="match status" value="1"/>
</dbReference>
<dbReference type="HAMAP" id="MF_00046">
    <property type="entry name" value="MurC"/>
    <property type="match status" value="1"/>
</dbReference>
<dbReference type="InterPro" id="IPR036565">
    <property type="entry name" value="Mur-like_cat_sf"/>
</dbReference>
<dbReference type="InterPro" id="IPR004101">
    <property type="entry name" value="Mur_ligase_C"/>
</dbReference>
<dbReference type="InterPro" id="IPR036615">
    <property type="entry name" value="Mur_ligase_C_dom_sf"/>
</dbReference>
<dbReference type="InterPro" id="IPR013221">
    <property type="entry name" value="Mur_ligase_cen"/>
</dbReference>
<dbReference type="InterPro" id="IPR000713">
    <property type="entry name" value="Mur_ligase_N"/>
</dbReference>
<dbReference type="InterPro" id="IPR050061">
    <property type="entry name" value="MurCDEF_pg_biosynth"/>
</dbReference>
<dbReference type="InterPro" id="IPR005758">
    <property type="entry name" value="UDP-N-AcMur_Ala_ligase_MurC"/>
</dbReference>
<dbReference type="NCBIfam" id="TIGR01082">
    <property type="entry name" value="murC"/>
    <property type="match status" value="1"/>
</dbReference>
<dbReference type="PANTHER" id="PTHR43445:SF3">
    <property type="entry name" value="UDP-N-ACETYLMURAMATE--L-ALANINE LIGASE"/>
    <property type="match status" value="1"/>
</dbReference>
<dbReference type="PANTHER" id="PTHR43445">
    <property type="entry name" value="UDP-N-ACETYLMURAMATE--L-ALANINE LIGASE-RELATED"/>
    <property type="match status" value="1"/>
</dbReference>
<dbReference type="Pfam" id="PF01225">
    <property type="entry name" value="Mur_ligase"/>
    <property type="match status" value="1"/>
</dbReference>
<dbReference type="Pfam" id="PF02875">
    <property type="entry name" value="Mur_ligase_C"/>
    <property type="match status" value="1"/>
</dbReference>
<dbReference type="Pfam" id="PF08245">
    <property type="entry name" value="Mur_ligase_M"/>
    <property type="match status" value="1"/>
</dbReference>
<dbReference type="SUPFAM" id="SSF51984">
    <property type="entry name" value="MurCD N-terminal domain"/>
    <property type="match status" value="1"/>
</dbReference>
<dbReference type="SUPFAM" id="SSF53623">
    <property type="entry name" value="MurD-like peptide ligases, catalytic domain"/>
    <property type="match status" value="1"/>
</dbReference>
<dbReference type="SUPFAM" id="SSF53244">
    <property type="entry name" value="MurD-like peptide ligases, peptide-binding domain"/>
    <property type="match status" value="1"/>
</dbReference>
<keyword id="KW-0067">ATP-binding</keyword>
<keyword id="KW-0131">Cell cycle</keyword>
<keyword id="KW-0132">Cell division</keyword>
<keyword id="KW-0133">Cell shape</keyword>
<keyword id="KW-0961">Cell wall biogenesis/degradation</keyword>
<keyword id="KW-0963">Cytoplasm</keyword>
<keyword id="KW-0436">Ligase</keyword>
<keyword id="KW-0547">Nucleotide-binding</keyword>
<keyword id="KW-0573">Peptidoglycan synthesis</keyword>
<gene>
    <name evidence="1" type="primary">murC</name>
    <name type="ordered locus">SP70585_1560</name>
</gene>
<comment type="function">
    <text evidence="1">Cell wall formation.</text>
</comment>
<comment type="catalytic activity">
    <reaction evidence="1">
        <text>UDP-N-acetyl-alpha-D-muramate + L-alanine + ATP = UDP-N-acetyl-alpha-D-muramoyl-L-alanine + ADP + phosphate + H(+)</text>
        <dbReference type="Rhea" id="RHEA:23372"/>
        <dbReference type="ChEBI" id="CHEBI:15378"/>
        <dbReference type="ChEBI" id="CHEBI:30616"/>
        <dbReference type="ChEBI" id="CHEBI:43474"/>
        <dbReference type="ChEBI" id="CHEBI:57972"/>
        <dbReference type="ChEBI" id="CHEBI:70757"/>
        <dbReference type="ChEBI" id="CHEBI:83898"/>
        <dbReference type="ChEBI" id="CHEBI:456216"/>
        <dbReference type="EC" id="6.3.2.8"/>
    </reaction>
</comment>
<comment type="pathway">
    <text evidence="1">Cell wall biogenesis; peptidoglycan biosynthesis.</text>
</comment>
<comment type="subcellular location">
    <subcellularLocation>
        <location evidence="1">Cytoplasm</location>
    </subcellularLocation>
</comment>
<comment type="similarity">
    <text evidence="1">Belongs to the MurCDEF family.</text>
</comment>
<accession>C1C8B2</accession>
<name>MURC_STRP7</name>
<sequence>MSKTYHFIGIKGSGMSALALMLHQMGHKVQGSDVEKYYFTQRGLEQAGITILPFDEKNLDGDMEIIAGNAFRPDNNVEIAYADQNGISYKRYHEFLGSFMRDFVSMGVAGAHGKTSTTGMLSHVLSHITDTSFLIGDGTGRGSANAKYFVFESDEYERHFMPYHPEYSIITNIDFDHPDYFTSLEDVFNAFNDYAKQITKGLFVYGEDAELRKITSDAPIYYYGFEAEGNDFVASDLLRSITGSTFTVHFRGQNLGQFHIPTFGRHNIMNATAVIGLLYTAGFDLNLVREHLKTFAGVKRRFTEKIVNDTVIIDDFAHHPTEIIATLDAARQKYPSKEIVAVFQPHTFTRTIALLDDFAHALNQADAVYLAQIYGSAREVDHGDVKVEDLANKINKKHQVITVENVSPLLDHDNAVYVFMGAGDIQTYEYSFERLLSNLTSNVQ</sequence>